<sequence length="61" mass="6947">MPIVTVKFLEGRSDEQKRALVERVTEAVAETIQANPEKIHVVLEEMRKDHYGVAGKRISDQ</sequence>
<protein>
    <recommendedName>
        <fullName>Probable tautomerase BH3814</fullName>
        <ecNumber>5.3.2.-</ecNumber>
    </recommendedName>
</protein>
<dbReference type="EC" id="5.3.2.-"/>
<dbReference type="EMBL" id="BA000004">
    <property type="protein sequence ID" value="BAB07533.1"/>
    <property type="molecule type" value="Genomic_DNA"/>
</dbReference>
<dbReference type="PIR" id="F84126">
    <property type="entry name" value="F84126"/>
</dbReference>
<dbReference type="RefSeq" id="WP_010899939.1">
    <property type="nucleotide sequence ID" value="NC_002570.2"/>
</dbReference>
<dbReference type="SMR" id="Q9K6B5"/>
<dbReference type="STRING" id="272558.gene:10729727"/>
<dbReference type="GeneID" id="87599360"/>
<dbReference type="KEGG" id="bha:BH3814"/>
<dbReference type="eggNOG" id="COG1942">
    <property type="taxonomic scope" value="Bacteria"/>
</dbReference>
<dbReference type="HOGENOM" id="CLU_148073_5_1_9"/>
<dbReference type="OrthoDB" id="9804765at2"/>
<dbReference type="Proteomes" id="UP000001258">
    <property type="component" value="Chromosome"/>
</dbReference>
<dbReference type="GO" id="GO:0016853">
    <property type="term" value="F:isomerase activity"/>
    <property type="evidence" value="ECO:0007669"/>
    <property type="project" value="UniProtKB-KW"/>
</dbReference>
<dbReference type="CDD" id="cd00491">
    <property type="entry name" value="4Oxalocrotonate_Tautomerase"/>
    <property type="match status" value="1"/>
</dbReference>
<dbReference type="Gene3D" id="3.30.429.10">
    <property type="entry name" value="Macrophage Migration Inhibitory Factor"/>
    <property type="match status" value="1"/>
</dbReference>
<dbReference type="InterPro" id="IPR018191">
    <property type="entry name" value="4-OT"/>
</dbReference>
<dbReference type="InterPro" id="IPR004370">
    <property type="entry name" value="4-OT-like_dom"/>
</dbReference>
<dbReference type="InterPro" id="IPR014347">
    <property type="entry name" value="Tautomerase/MIF_sf"/>
</dbReference>
<dbReference type="NCBIfam" id="NF002571">
    <property type="entry name" value="PRK02220.1"/>
    <property type="match status" value="1"/>
</dbReference>
<dbReference type="NCBIfam" id="TIGR00013">
    <property type="entry name" value="taut"/>
    <property type="match status" value="1"/>
</dbReference>
<dbReference type="PANTHER" id="PTHR35530:SF1">
    <property type="entry name" value="2-HYDROXYMUCONATE TAUTOMERASE"/>
    <property type="match status" value="1"/>
</dbReference>
<dbReference type="PANTHER" id="PTHR35530">
    <property type="entry name" value="TAUTOMERASE-RELATED"/>
    <property type="match status" value="1"/>
</dbReference>
<dbReference type="Pfam" id="PF01361">
    <property type="entry name" value="Tautomerase"/>
    <property type="match status" value="1"/>
</dbReference>
<dbReference type="SUPFAM" id="SSF55331">
    <property type="entry name" value="Tautomerase/MIF"/>
    <property type="match status" value="1"/>
</dbReference>
<evidence type="ECO:0000250" key="1"/>
<evidence type="ECO:0000305" key="2"/>
<feature type="initiator methionine" description="Removed" evidence="1">
    <location>
        <position position="1"/>
    </location>
</feature>
<feature type="chain" id="PRO_0000209521" description="Probable tautomerase BH3814">
    <location>
        <begin position="2"/>
        <end position="61"/>
    </location>
</feature>
<feature type="active site" description="Proton acceptor; via imino nitrogen" evidence="1">
    <location>
        <position position="2"/>
    </location>
</feature>
<name>Y3814_HALH5</name>
<comment type="similarity">
    <text evidence="2">Belongs to the 4-oxalocrotonate tautomerase family.</text>
</comment>
<keyword id="KW-0413">Isomerase</keyword>
<keyword id="KW-1185">Reference proteome</keyword>
<accession>Q9K6B5</accession>
<reference key="1">
    <citation type="journal article" date="2000" name="Nucleic Acids Res.">
        <title>Complete genome sequence of the alkaliphilic bacterium Bacillus halodurans and genomic sequence comparison with Bacillus subtilis.</title>
        <authorList>
            <person name="Takami H."/>
            <person name="Nakasone K."/>
            <person name="Takaki Y."/>
            <person name="Maeno G."/>
            <person name="Sasaki R."/>
            <person name="Masui N."/>
            <person name="Fuji F."/>
            <person name="Hirama C."/>
            <person name="Nakamura Y."/>
            <person name="Ogasawara N."/>
            <person name="Kuhara S."/>
            <person name="Horikoshi K."/>
        </authorList>
    </citation>
    <scope>NUCLEOTIDE SEQUENCE [LARGE SCALE GENOMIC DNA]</scope>
    <source>
        <strain>ATCC BAA-125 / DSM 18197 / FERM 7344 / JCM 9153 / C-125</strain>
    </source>
</reference>
<gene>
    <name type="ordered locus">BH3814</name>
</gene>
<proteinExistence type="inferred from homology"/>
<organism>
    <name type="scientific">Halalkalibacterium halodurans (strain ATCC BAA-125 / DSM 18197 / FERM 7344 / JCM 9153 / C-125)</name>
    <name type="common">Bacillus halodurans</name>
    <dbReference type="NCBI Taxonomy" id="272558"/>
    <lineage>
        <taxon>Bacteria</taxon>
        <taxon>Bacillati</taxon>
        <taxon>Bacillota</taxon>
        <taxon>Bacilli</taxon>
        <taxon>Bacillales</taxon>
        <taxon>Bacillaceae</taxon>
        <taxon>Halalkalibacterium (ex Joshi et al. 2022)</taxon>
    </lineage>
</organism>